<reference key="1">
    <citation type="journal article" date="2007" name="Archaea">
        <title>The genome of Hyperthermus butylicus: a sulfur-reducing, peptide fermenting, neutrophilic Crenarchaeote growing up to 108 degrees C.</title>
        <authorList>
            <person name="Bruegger K."/>
            <person name="Chen L."/>
            <person name="Stark M."/>
            <person name="Zibat A."/>
            <person name="Redder P."/>
            <person name="Ruepp A."/>
            <person name="Awayez M."/>
            <person name="She Q."/>
            <person name="Garrett R.A."/>
            <person name="Klenk H.-P."/>
        </authorList>
    </citation>
    <scope>NUCLEOTIDE SEQUENCE [LARGE SCALE GENOMIC DNA]</scope>
    <source>
        <strain>DSM 5456 / JCM 9403 / PLM1-5</strain>
    </source>
</reference>
<sequence length="62" mass="6931">MACEKPVKVRDPTTGKEVELVPIKVWQLAPKGRKGVKIGLFKSPETGKYFRAKVPDDYPICS</sequence>
<proteinExistence type="inferred from homology"/>
<protein>
    <recommendedName>
        <fullName evidence="1">Chromatin protein Cren7 1</fullName>
    </recommendedName>
</protein>
<comment type="function">
    <text evidence="1">A chromatin protein, binds double-stranded DNA without sequence specificity. Constrains negative DNA supercoils.</text>
</comment>
<comment type="subunit">
    <text evidence="1">Monomer.</text>
</comment>
<comment type="subcellular location">
    <subcellularLocation>
        <location evidence="1">Chromosome</location>
    </subcellularLocation>
    <subcellularLocation>
        <location evidence="1">Cytoplasm</location>
    </subcellularLocation>
</comment>
<comment type="PTM">
    <text evidence="1">Methylated at multiple sites, to varying extents.</text>
</comment>
<comment type="similarity">
    <text evidence="1">Belongs to the Cren7 family.</text>
</comment>
<gene>
    <name type="primary">cren7-1</name>
    <name type="ordered locus">Hbut_0878</name>
</gene>
<evidence type="ECO:0000255" key="1">
    <source>
        <dbReference type="HAMAP-Rule" id="MF_01387"/>
    </source>
</evidence>
<feature type="chain" id="PRO_0000345167" description="Chromatin protein Cren7 1">
    <location>
        <begin position="1"/>
        <end position="62"/>
    </location>
</feature>
<dbReference type="EMBL" id="CP000493">
    <property type="protein sequence ID" value="ABM80729.1"/>
    <property type="molecule type" value="Genomic_DNA"/>
</dbReference>
<dbReference type="RefSeq" id="WP_011822047.1">
    <property type="nucleotide sequence ID" value="NC_008818.1"/>
</dbReference>
<dbReference type="SMR" id="A2BL68"/>
<dbReference type="EnsemblBacteria" id="ABM80729">
    <property type="protein sequence ID" value="ABM80729"/>
    <property type="gene ID" value="Hbut_0878"/>
</dbReference>
<dbReference type="GeneID" id="4781648"/>
<dbReference type="KEGG" id="hbu:Hbut_0878"/>
<dbReference type="eggNOG" id="arCOG04114">
    <property type="taxonomic scope" value="Archaea"/>
</dbReference>
<dbReference type="HOGENOM" id="CLU_2911298_0_0_2"/>
<dbReference type="OrthoDB" id="38142at2157"/>
<dbReference type="Proteomes" id="UP000002593">
    <property type="component" value="Chromosome"/>
</dbReference>
<dbReference type="GO" id="GO:0005694">
    <property type="term" value="C:chromosome"/>
    <property type="evidence" value="ECO:0007669"/>
    <property type="project" value="UniProtKB-SubCell"/>
</dbReference>
<dbReference type="GO" id="GO:0005737">
    <property type="term" value="C:cytoplasm"/>
    <property type="evidence" value="ECO:0007669"/>
    <property type="project" value="UniProtKB-SubCell"/>
</dbReference>
<dbReference type="GO" id="GO:0003690">
    <property type="term" value="F:double-stranded DNA binding"/>
    <property type="evidence" value="ECO:0007669"/>
    <property type="project" value="UniProtKB-UniRule"/>
</dbReference>
<dbReference type="Gene3D" id="2.30.30.610">
    <property type="entry name" value="Chromatin protein Cren7"/>
    <property type="match status" value="1"/>
</dbReference>
<dbReference type="HAMAP" id="MF_01387">
    <property type="entry name" value="Chromatin_Cren7"/>
    <property type="match status" value="1"/>
</dbReference>
<dbReference type="InterPro" id="IPR038647">
    <property type="entry name" value="Cren7_sf"/>
</dbReference>
<dbReference type="InterPro" id="IPR020906">
    <property type="entry name" value="dsDNA-bd_Cren7"/>
</dbReference>
<dbReference type="Pfam" id="PF11520">
    <property type="entry name" value="Cren7"/>
    <property type="match status" value="1"/>
</dbReference>
<organism>
    <name type="scientific">Hyperthermus butylicus (strain DSM 5456 / JCM 9403 / PLM1-5)</name>
    <dbReference type="NCBI Taxonomy" id="415426"/>
    <lineage>
        <taxon>Archaea</taxon>
        <taxon>Thermoproteota</taxon>
        <taxon>Thermoprotei</taxon>
        <taxon>Desulfurococcales</taxon>
        <taxon>Pyrodictiaceae</taxon>
        <taxon>Hyperthermus</taxon>
    </lineage>
</organism>
<name>CRN71_HYPBU</name>
<accession>A2BL68</accession>
<keyword id="KW-0158">Chromosome</keyword>
<keyword id="KW-0963">Cytoplasm</keyword>
<keyword id="KW-0238">DNA-binding</keyword>
<keyword id="KW-0488">Methylation</keyword>
<keyword id="KW-1185">Reference proteome</keyword>